<organism>
    <name type="scientific">Paraburkholderia phymatum (strain DSM 17167 / CIP 108236 / LMG 21445 / STM815)</name>
    <name type="common">Burkholderia phymatum</name>
    <dbReference type="NCBI Taxonomy" id="391038"/>
    <lineage>
        <taxon>Bacteria</taxon>
        <taxon>Pseudomonadati</taxon>
        <taxon>Pseudomonadota</taxon>
        <taxon>Betaproteobacteria</taxon>
        <taxon>Burkholderiales</taxon>
        <taxon>Burkholderiaceae</taxon>
        <taxon>Paraburkholderia</taxon>
    </lineage>
</organism>
<protein>
    <recommendedName>
        <fullName evidence="1">Leucine--tRNA ligase</fullName>
        <ecNumber evidence="1">6.1.1.4</ecNumber>
    </recommendedName>
    <alternativeName>
        <fullName evidence="1">Leucyl-tRNA synthetase</fullName>
        <shortName evidence="1">LeuRS</shortName>
    </alternativeName>
</protein>
<dbReference type="EC" id="6.1.1.4" evidence="1"/>
<dbReference type="EMBL" id="CP001043">
    <property type="protein sequence ID" value="ACC71760.1"/>
    <property type="molecule type" value="Genomic_DNA"/>
</dbReference>
<dbReference type="RefSeq" id="WP_012401962.1">
    <property type="nucleotide sequence ID" value="NC_010622.1"/>
</dbReference>
<dbReference type="SMR" id="B2JGX6"/>
<dbReference type="STRING" id="391038.Bphy_2588"/>
<dbReference type="KEGG" id="bph:Bphy_2588"/>
<dbReference type="eggNOG" id="COG0495">
    <property type="taxonomic scope" value="Bacteria"/>
</dbReference>
<dbReference type="HOGENOM" id="CLU_004427_0_0_4"/>
<dbReference type="OrthoDB" id="9810365at2"/>
<dbReference type="Proteomes" id="UP000001192">
    <property type="component" value="Chromosome 1"/>
</dbReference>
<dbReference type="GO" id="GO:0005829">
    <property type="term" value="C:cytosol"/>
    <property type="evidence" value="ECO:0007669"/>
    <property type="project" value="TreeGrafter"/>
</dbReference>
<dbReference type="GO" id="GO:0002161">
    <property type="term" value="F:aminoacyl-tRNA deacylase activity"/>
    <property type="evidence" value="ECO:0007669"/>
    <property type="project" value="InterPro"/>
</dbReference>
<dbReference type="GO" id="GO:0005524">
    <property type="term" value="F:ATP binding"/>
    <property type="evidence" value="ECO:0007669"/>
    <property type="project" value="UniProtKB-UniRule"/>
</dbReference>
<dbReference type="GO" id="GO:0004823">
    <property type="term" value="F:leucine-tRNA ligase activity"/>
    <property type="evidence" value="ECO:0007669"/>
    <property type="project" value="UniProtKB-UniRule"/>
</dbReference>
<dbReference type="GO" id="GO:0006429">
    <property type="term" value="P:leucyl-tRNA aminoacylation"/>
    <property type="evidence" value="ECO:0007669"/>
    <property type="project" value="UniProtKB-UniRule"/>
</dbReference>
<dbReference type="CDD" id="cd07958">
    <property type="entry name" value="Anticodon_Ia_Leu_BEm"/>
    <property type="match status" value="1"/>
</dbReference>
<dbReference type="CDD" id="cd00812">
    <property type="entry name" value="LeuRS_core"/>
    <property type="match status" value="1"/>
</dbReference>
<dbReference type="FunFam" id="1.10.730.10:FF:000002">
    <property type="entry name" value="Leucine--tRNA ligase"/>
    <property type="match status" value="1"/>
</dbReference>
<dbReference type="FunFam" id="2.20.28.290:FF:000001">
    <property type="entry name" value="Leucine--tRNA ligase"/>
    <property type="match status" value="1"/>
</dbReference>
<dbReference type="FunFam" id="3.10.20.590:FF:000001">
    <property type="entry name" value="Leucine--tRNA ligase"/>
    <property type="match status" value="1"/>
</dbReference>
<dbReference type="FunFam" id="3.40.50.620:FF:000003">
    <property type="entry name" value="Leucine--tRNA ligase"/>
    <property type="match status" value="1"/>
</dbReference>
<dbReference type="FunFam" id="3.40.50.620:FF:000056">
    <property type="entry name" value="Leucine--tRNA ligase"/>
    <property type="match status" value="1"/>
</dbReference>
<dbReference type="FunFam" id="3.90.740.10:FF:000012">
    <property type="entry name" value="Leucine--tRNA ligase"/>
    <property type="match status" value="1"/>
</dbReference>
<dbReference type="Gene3D" id="2.20.28.290">
    <property type="match status" value="1"/>
</dbReference>
<dbReference type="Gene3D" id="3.10.20.590">
    <property type="match status" value="1"/>
</dbReference>
<dbReference type="Gene3D" id="3.40.50.620">
    <property type="entry name" value="HUPs"/>
    <property type="match status" value="2"/>
</dbReference>
<dbReference type="Gene3D" id="1.10.730.10">
    <property type="entry name" value="Isoleucyl-tRNA Synthetase, Domain 1"/>
    <property type="match status" value="1"/>
</dbReference>
<dbReference type="Gene3D" id="3.90.740.10">
    <property type="entry name" value="Valyl/Leucyl/Isoleucyl-tRNA synthetase, editing domain"/>
    <property type="match status" value="1"/>
</dbReference>
<dbReference type="HAMAP" id="MF_00049_B">
    <property type="entry name" value="Leu_tRNA_synth_B"/>
    <property type="match status" value="1"/>
</dbReference>
<dbReference type="InterPro" id="IPR001412">
    <property type="entry name" value="aa-tRNA-synth_I_CS"/>
</dbReference>
<dbReference type="InterPro" id="IPR002300">
    <property type="entry name" value="aa-tRNA-synth_Ia"/>
</dbReference>
<dbReference type="InterPro" id="IPR002302">
    <property type="entry name" value="Leu-tRNA-ligase"/>
</dbReference>
<dbReference type="InterPro" id="IPR025709">
    <property type="entry name" value="Leu_tRNA-synth_edit"/>
</dbReference>
<dbReference type="InterPro" id="IPR013155">
    <property type="entry name" value="M/V/L/I-tRNA-synth_anticd-bd"/>
</dbReference>
<dbReference type="InterPro" id="IPR015413">
    <property type="entry name" value="Methionyl/Leucyl_tRNA_Synth"/>
</dbReference>
<dbReference type="InterPro" id="IPR014729">
    <property type="entry name" value="Rossmann-like_a/b/a_fold"/>
</dbReference>
<dbReference type="InterPro" id="IPR009080">
    <property type="entry name" value="tRNAsynth_Ia_anticodon-bd"/>
</dbReference>
<dbReference type="InterPro" id="IPR009008">
    <property type="entry name" value="Val/Leu/Ile-tRNA-synth_edit"/>
</dbReference>
<dbReference type="NCBIfam" id="TIGR00396">
    <property type="entry name" value="leuS_bact"/>
    <property type="match status" value="1"/>
</dbReference>
<dbReference type="PANTHER" id="PTHR43740:SF2">
    <property type="entry name" value="LEUCINE--TRNA LIGASE, MITOCHONDRIAL"/>
    <property type="match status" value="1"/>
</dbReference>
<dbReference type="PANTHER" id="PTHR43740">
    <property type="entry name" value="LEUCYL-TRNA SYNTHETASE"/>
    <property type="match status" value="1"/>
</dbReference>
<dbReference type="Pfam" id="PF08264">
    <property type="entry name" value="Anticodon_1"/>
    <property type="match status" value="1"/>
</dbReference>
<dbReference type="Pfam" id="PF00133">
    <property type="entry name" value="tRNA-synt_1"/>
    <property type="match status" value="2"/>
</dbReference>
<dbReference type="Pfam" id="PF13603">
    <property type="entry name" value="tRNA-synt_1_2"/>
    <property type="match status" value="1"/>
</dbReference>
<dbReference type="Pfam" id="PF09334">
    <property type="entry name" value="tRNA-synt_1g"/>
    <property type="match status" value="1"/>
</dbReference>
<dbReference type="PRINTS" id="PR00985">
    <property type="entry name" value="TRNASYNTHLEU"/>
</dbReference>
<dbReference type="SUPFAM" id="SSF47323">
    <property type="entry name" value="Anticodon-binding domain of a subclass of class I aminoacyl-tRNA synthetases"/>
    <property type="match status" value="1"/>
</dbReference>
<dbReference type="SUPFAM" id="SSF52374">
    <property type="entry name" value="Nucleotidylyl transferase"/>
    <property type="match status" value="1"/>
</dbReference>
<dbReference type="SUPFAM" id="SSF50677">
    <property type="entry name" value="ValRS/IleRS/LeuRS editing domain"/>
    <property type="match status" value="1"/>
</dbReference>
<dbReference type="PROSITE" id="PS00178">
    <property type="entry name" value="AA_TRNA_LIGASE_I"/>
    <property type="match status" value="1"/>
</dbReference>
<evidence type="ECO:0000255" key="1">
    <source>
        <dbReference type="HAMAP-Rule" id="MF_00049"/>
    </source>
</evidence>
<name>SYL_PARP8</name>
<sequence>MHEKYVPSDVESAAQGQWRATDAYKTTETADKPKFYCVSMLPYPSGKLHMGHVRNYTINDVMYRYLRMNGYNTLMPMGWDAFGMPAENAAMANGVPPAKWTYDNIAYMKKQMQSMGLAIDWSREVATCSPDYYKWNQWIFLKMLEKGIAYKKTGTVNWDPVDQTVLANEQVIDGRGWRSGALVEKREIPMYYMRITQYADELLNDLDGLGWPERVKVMQQNWIGKSFGVNFGFPYELDGEQKLLRVFTTRADTIMGVTFCAVAAEHPLATRLAQGRPDLQSFIDECKHGGVAEADMATMEKKGMATGFFVTHPLTQEKVEVWIGNYVLMSYGEGAVMGVPAHDERDFAFVKKYGIPVKQVVAVEGETFSTDAWQESYGDKENGVLINSGKYDGLKYGEAVDAIAADLKALGLGEKQVTWRLRDWGISRQRYWGTPIPIIHCPSCGDVPVPEKDLPVVLPEDLVPDGTGNPLAKSEAFLNCTCPTCGAAAKRETDTMDTFVDSSWYFYRYAAPDAKTMVDARTDYWMPMDQYIGGIEHAILHLLYSRFWAKVCRDLGIVKFGEPAKNLLTQGMVLNETYYRENDAGKKTWYNPADVTVTHDDKGRPVGATLNADGQPVVLGGVEKMSKSKNNGVDPQVLIDQYGADTARLFTMFAAPPEQQLEWSGAGVEGASRFLRRVWAFGQANETALTERAPFDAAKLADTEKTLRREIYSVLKQADFDYQRLQYNTVVSAAMKMLNAIEGAKGASAAVLRETYGVLLRVLYPVVPHVTFQLWRELGYEGEFGSLLDAPWPKVDEKALEQSEIELVLQVNGKVRGAVTVAKDASREAIEAVALAHEMFAKFSEGKPAKKVIVVPGRLVNVVV</sequence>
<reference key="1">
    <citation type="journal article" date="2014" name="Stand. Genomic Sci.">
        <title>Complete genome sequence of Burkholderia phymatum STM815(T), a broad host range and efficient nitrogen-fixing symbiont of Mimosa species.</title>
        <authorList>
            <person name="Moulin L."/>
            <person name="Klonowska A."/>
            <person name="Caroline B."/>
            <person name="Booth K."/>
            <person name="Vriezen J.A."/>
            <person name="Melkonian R."/>
            <person name="James E.K."/>
            <person name="Young J.P."/>
            <person name="Bena G."/>
            <person name="Hauser L."/>
            <person name="Land M."/>
            <person name="Kyrpides N."/>
            <person name="Bruce D."/>
            <person name="Chain P."/>
            <person name="Copeland A."/>
            <person name="Pitluck S."/>
            <person name="Woyke T."/>
            <person name="Lizotte-Waniewski M."/>
            <person name="Bristow J."/>
            <person name="Riley M."/>
        </authorList>
    </citation>
    <scope>NUCLEOTIDE SEQUENCE [LARGE SCALE GENOMIC DNA]</scope>
    <source>
        <strain>DSM 17167 / CIP 108236 / LMG 21445 / STM815</strain>
    </source>
</reference>
<gene>
    <name evidence="1" type="primary">leuS</name>
    <name type="ordered locus">Bphy_2588</name>
</gene>
<keyword id="KW-0030">Aminoacyl-tRNA synthetase</keyword>
<keyword id="KW-0067">ATP-binding</keyword>
<keyword id="KW-0963">Cytoplasm</keyword>
<keyword id="KW-0436">Ligase</keyword>
<keyword id="KW-0547">Nucleotide-binding</keyword>
<keyword id="KW-0648">Protein biosynthesis</keyword>
<keyword id="KW-1185">Reference proteome</keyword>
<comment type="catalytic activity">
    <reaction evidence="1">
        <text>tRNA(Leu) + L-leucine + ATP = L-leucyl-tRNA(Leu) + AMP + diphosphate</text>
        <dbReference type="Rhea" id="RHEA:11688"/>
        <dbReference type="Rhea" id="RHEA-COMP:9613"/>
        <dbReference type="Rhea" id="RHEA-COMP:9622"/>
        <dbReference type="ChEBI" id="CHEBI:30616"/>
        <dbReference type="ChEBI" id="CHEBI:33019"/>
        <dbReference type="ChEBI" id="CHEBI:57427"/>
        <dbReference type="ChEBI" id="CHEBI:78442"/>
        <dbReference type="ChEBI" id="CHEBI:78494"/>
        <dbReference type="ChEBI" id="CHEBI:456215"/>
        <dbReference type="EC" id="6.1.1.4"/>
    </reaction>
</comment>
<comment type="subcellular location">
    <subcellularLocation>
        <location evidence="1">Cytoplasm</location>
    </subcellularLocation>
</comment>
<comment type="similarity">
    <text evidence="1">Belongs to the class-I aminoacyl-tRNA synthetase family.</text>
</comment>
<accession>B2JGX6</accession>
<feature type="chain" id="PRO_1000091300" description="Leucine--tRNA ligase">
    <location>
        <begin position="1"/>
        <end position="864"/>
    </location>
</feature>
<feature type="short sequence motif" description="'HIGH' region">
    <location>
        <begin position="42"/>
        <end position="52"/>
    </location>
</feature>
<feature type="short sequence motif" description="'KMSKS' region">
    <location>
        <begin position="624"/>
        <end position="628"/>
    </location>
</feature>
<feature type="binding site" evidence="1">
    <location>
        <position position="627"/>
    </location>
    <ligand>
        <name>ATP</name>
        <dbReference type="ChEBI" id="CHEBI:30616"/>
    </ligand>
</feature>
<proteinExistence type="inferred from homology"/>